<organism>
    <name type="scientific">Mycobacterium tuberculosis (strain CDC 1551 / Oshkosh)</name>
    <dbReference type="NCBI Taxonomy" id="83331"/>
    <lineage>
        <taxon>Bacteria</taxon>
        <taxon>Bacillati</taxon>
        <taxon>Actinomycetota</taxon>
        <taxon>Actinomycetes</taxon>
        <taxon>Mycobacteriales</taxon>
        <taxon>Mycobacteriaceae</taxon>
        <taxon>Mycobacterium</taxon>
        <taxon>Mycobacterium tuberculosis complex</taxon>
    </lineage>
</organism>
<reference key="1">
    <citation type="journal article" date="2002" name="J. Bacteriol.">
        <title>Whole-genome comparison of Mycobacterium tuberculosis clinical and laboratory strains.</title>
        <authorList>
            <person name="Fleischmann R.D."/>
            <person name="Alland D."/>
            <person name="Eisen J.A."/>
            <person name="Carpenter L."/>
            <person name="White O."/>
            <person name="Peterson J.D."/>
            <person name="DeBoy R.T."/>
            <person name="Dodson R.J."/>
            <person name="Gwinn M.L."/>
            <person name="Haft D.H."/>
            <person name="Hickey E.K."/>
            <person name="Kolonay J.F."/>
            <person name="Nelson W.C."/>
            <person name="Umayam L.A."/>
            <person name="Ermolaeva M.D."/>
            <person name="Salzberg S.L."/>
            <person name="Delcher A."/>
            <person name="Utterback T.R."/>
            <person name="Weidman J.F."/>
            <person name="Khouri H.M."/>
            <person name="Gill J."/>
            <person name="Mikula A."/>
            <person name="Bishai W."/>
            <person name="Jacobs W.R. Jr."/>
            <person name="Venter J.C."/>
            <person name="Fraser C.M."/>
        </authorList>
    </citation>
    <scope>NUCLEOTIDE SEQUENCE [LARGE SCALE GENOMIC DNA]</scope>
    <source>
        <strain>CDC 1551 / Oshkosh</strain>
    </source>
</reference>
<dbReference type="EC" id="2.4.2.1" evidence="2"/>
<dbReference type="EC" id="3.5.4.4" evidence="2"/>
<dbReference type="EC" id="2.4.2.28" evidence="2"/>
<dbReference type="EMBL" id="AE000516">
    <property type="protein sequence ID" value="AAK46492.1"/>
    <property type="status" value="ALT_INIT"/>
    <property type="molecule type" value="Genomic_DNA"/>
</dbReference>
<dbReference type="PIR" id="A70579">
    <property type="entry name" value="A70579"/>
</dbReference>
<dbReference type="SMR" id="P9WKD4"/>
<dbReference type="KEGG" id="mtc:MT2208"/>
<dbReference type="PATRIC" id="fig|83331.31.peg.2381"/>
<dbReference type="HOGENOM" id="CLU_065784_3_1_11"/>
<dbReference type="Proteomes" id="UP000001020">
    <property type="component" value="Chromosome"/>
</dbReference>
<dbReference type="GO" id="GO:0004000">
    <property type="term" value="F:adenosine deaminase activity"/>
    <property type="evidence" value="ECO:0007669"/>
    <property type="project" value="RHEA"/>
</dbReference>
<dbReference type="GO" id="GO:0005507">
    <property type="term" value="F:copper ion binding"/>
    <property type="evidence" value="ECO:0007669"/>
    <property type="project" value="TreeGrafter"/>
</dbReference>
<dbReference type="GO" id="GO:0016491">
    <property type="term" value="F:oxidoreductase activity"/>
    <property type="evidence" value="ECO:0007669"/>
    <property type="project" value="UniProtKB-KW"/>
</dbReference>
<dbReference type="GO" id="GO:0017061">
    <property type="term" value="F:S-methyl-5-thioadenosine phosphorylase activity"/>
    <property type="evidence" value="ECO:0007669"/>
    <property type="project" value="UniProtKB-EC"/>
</dbReference>
<dbReference type="CDD" id="cd16833">
    <property type="entry name" value="YfiH"/>
    <property type="match status" value="1"/>
</dbReference>
<dbReference type="FunFam" id="3.60.140.10:FF:000003">
    <property type="entry name" value="Polyphenol oxidase"/>
    <property type="match status" value="1"/>
</dbReference>
<dbReference type="Gene3D" id="3.60.140.10">
    <property type="entry name" value="CNF1/YfiH-like putative cysteine hydrolases"/>
    <property type="match status" value="1"/>
</dbReference>
<dbReference type="InterPro" id="IPR003730">
    <property type="entry name" value="Cu_polyphenol_OxRdtase"/>
</dbReference>
<dbReference type="InterPro" id="IPR038371">
    <property type="entry name" value="Cu_polyphenol_OxRdtase_sf"/>
</dbReference>
<dbReference type="InterPro" id="IPR011324">
    <property type="entry name" value="Cytotoxic_necrot_fac-like_cat"/>
</dbReference>
<dbReference type="NCBIfam" id="TIGR00726">
    <property type="entry name" value="peptidoglycan editing factor PgeF"/>
    <property type="match status" value="1"/>
</dbReference>
<dbReference type="PANTHER" id="PTHR30616:SF2">
    <property type="entry name" value="PURINE NUCLEOSIDE PHOSPHORYLASE LACC1"/>
    <property type="match status" value="1"/>
</dbReference>
<dbReference type="PANTHER" id="PTHR30616">
    <property type="entry name" value="UNCHARACTERIZED PROTEIN YFIH"/>
    <property type="match status" value="1"/>
</dbReference>
<dbReference type="Pfam" id="PF02578">
    <property type="entry name" value="Cu-oxidase_4"/>
    <property type="match status" value="1"/>
</dbReference>
<dbReference type="SUPFAM" id="SSF64438">
    <property type="entry name" value="CNF1/YfiH-like putative cysteine hydrolases"/>
    <property type="match status" value="1"/>
</dbReference>
<name>PURNU_MYCTO</name>
<keyword id="KW-0186">Copper</keyword>
<keyword id="KW-0378">Hydrolase</keyword>
<keyword id="KW-0479">Metal-binding</keyword>
<keyword id="KW-0560">Oxidoreductase</keyword>
<keyword id="KW-1185">Reference proteome</keyword>
<keyword id="KW-0808">Transferase</keyword>
<keyword id="KW-0862">Zinc</keyword>
<evidence type="ECO:0000250" key="1">
    <source>
        <dbReference type="UniProtKB" id="P33644"/>
    </source>
</evidence>
<evidence type="ECO:0000250" key="2">
    <source>
        <dbReference type="UniProtKB" id="P84138"/>
    </source>
</evidence>
<evidence type="ECO:0000250" key="3">
    <source>
        <dbReference type="UniProtKB" id="Q1EIR0"/>
    </source>
</evidence>
<evidence type="ECO:0000305" key="4"/>
<feature type="chain" id="PRO_0000427673" description="Purine nucleoside phosphorylase MT2208">
    <location>
        <begin position="1"/>
        <end position="250"/>
    </location>
</feature>
<feature type="binding site" evidence="2">
    <location>
        <position position="77"/>
    </location>
    <ligand>
        <name>Zn(2+)</name>
        <dbReference type="ChEBI" id="CHEBI:29105"/>
        <note>catalytic</note>
    </ligand>
</feature>
<feature type="binding site" evidence="2">
    <location>
        <position position="114"/>
    </location>
    <ligand>
        <name>Zn(2+)</name>
        <dbReference type="ChEBI" id="CHEBI:29105"/>
        <note>catalytic</note>
    </ligand>
</feature>
<feature type="binding site" evidence="2">
    <location>
        <position position="131"/>
    </location>
    <ligand>
        <name>Zn(2+)</name>
        <dbReference type="ChEBI" id="CHEBI:29105"/>
        <note>catalytic</note>
    </ligand>
</feature>
<protein>
    <recommendedName>
        <fullName>Purine nucleoside phosphorylase MT2208</fullName>
        <ecNumber evidence="2">2.4.2.1</ecNumber>
    </recommendedName>
    <alternativeName>
        <fullName>Adenosine deaminase MT2208</fullName>
        <ecNumber evidence="2">3.5.4.4</ecNumber>
    </alternativeName>
    <alternativeName>
        <fullName>S-methyl-5'-thioadenosine phosphorylase MT2208</fullName>
        <ecNumber evidence="2">2.4.2.28</ecNumber>
    </alternativeName>
</protein>
<proteinExistence type="inferred from homology"/>
<comment type="function">
    <text evidence="2">Purine nucleoside enzyme that catalyzes the phosphorolysis of adenosine and inosine nucleosides, yielding D-ribose 1-phosphate and the respective free bases, adenine and hypoxanthine. Also catalyzes the phosphorolysis of S-methyl-5'-thioadenosine into adenine and S-methyl-5-thio-alpha-D-ribose 1-phosphate. Also has adenosine deaminase activity.</text>
</comment>
<comment type="catalytic activity">
    <reaction evidence="2">
        <text>adenosine + phosphate = alpha-D-ribose 1-phosphate + adenine</text>
        <dbReference type="Rhea" id="RHEA:27642"/>
        <dbReference type="ChEBI" id="CHEBI:16335"/>
        <dbReference type="ChEBI" id="CHEBI:16708"/>
        <dbReference type="ChEBI" id="CHEBI:43474"/>
        <dbReference type="ChEBI" id="CHEBI:57720"/>
        <dbReference type="EC" id="2.4.2.1"/>
    </reaction>
    <physiologicalReaction direction="left-to-right" evidence="2">
        <dbReference type="Rhea" id="RHEA:27643"/>
    </physiologicalReaction>
</comment>
<comment type="catalytic activity">
    <reaction evidence="2">
        <text>S-methyl-5'-thioadenosine + phosphate = 5-(methylsulfanyl)-alpha-D-ribose 1-phosphate + adenine</text>
        <dbReference type="Rhea" id="RHEA:11852"/>
        <dbReference type="ChEBI" id="CHEBI:16708"/>
        <dbReference type="ChEBI" id="CHEBI:17509"/>
        <dbReference type="ChEBI" id="CHEBI:43474"/>
        <dbReference type="ChEBI" id="CHEBI:58533"/>
        <dbReference type="EC" id="2.4.2.28"/>
    </reaction>
    <physiologicalReaction direction="left-to-right" evidence="2">
        <dbReference type="Rhea" id="RHEA:11853"/>
    </physiologicalReaction>
</comment>
<comment type="catalytic activity">
    <reaction evidence="2">
        <text>inosine + phosphate = alpha-D-ribose 1-phosphate + hypoxanthine</text>
        <dbReference type="Rhea" id="RHEA:27646"/>
        <dbReference type="ChEBI" id="CHEBI:17368"/>
        <dbReference type="ChEBI" id="CHEBI:17596"/>
        <dbReference type="ChEBI" id="CHEBI:43474"/>
        <dbReference type="ChEBI" id="CHEBI:57720"/>
        <dbReference type="EC" id="2.4.2.1"/>
    </reaction>
    <physiologicalReaction direction="left-to-right" evidence="2">
        <dbReference type="Rhea" id="RHEA:27647"/>
    </physiologicalReaction>
</comment>
<comment type="catalytic activity">
    <reaction evidence="2">
        <text>adenosine + H2O + H(+) = inosine + NH4(+)</text>
        <dbReference type="Rhea" id="RHEA:24408"/>
        <dbReference type="ChEBI" id="CHEBI:15377"/>
        <dbReference type="ChEBI" id="CHEBI:15378"/>
        <dbReference type="ChEBI" id="CHEBI:16335"/>
        <dbReference type="ChEBI" id="CHEBI:17596"/>
        <dbReference type="ChEBI" id="CHEBI:28938"/>
        <dbReference type="EC" id="3.5.4.4"/>
    </reaction>
    <physiologicalReaction direction="left-to-right" evidence="2">
        <dbReference type="Rhea" id="RHEA:24409"/>
    </physiologicalReaction>
</comment>
<comment type="cofactor">
    <cofactor evidence="1">
        <name>Cu(2+)</name>
        <dbReference type="ChEBI" id="CHEBI:29036"/>
    </cofactor>
    <cofactor evidence="2">
        <name>Zn(2+)</name>
        <dbReference type="ChEBI" id="CHEBI:29105"/>
    </cofactor>
</comment>
<comment type="subunit">
    <text evidence="3">Homodimer.</text>
</comment>
<comment type="similarity">
    <text evidence="4">Belongs to the purine nucleoside phosphorylase YfiH/LACC1 family.</text>
</comment>
<comment type="sequence caution" evidence="4">
    <conflict type="erroneous initiation">
        <sequence resource="EMBL-CDS" id="AAK46492"/>
    </conflict>
</comment>
<sequence length="250" mass="25965">MLASTRHIARGDTGNVSVRIRRVTTTRAGGVSAPPFDTFNLGDHVGDDPAAVAANRARLAAAIGLPGNRVVWMNQVHGDRVELVDQPRNTALDDTDGLVTATPRLALAVVTADCVPVLMADARAGIAAAVHAGRAGAQRGVVVRALEVMLSLGAQVRDISALLGPAVSGRNYEVPAAMADEVEAALPGSRTTTAAGTPGVDLRAGIACQLRDLGVESIDVDPRCTVADPTLFSHRRDAPTGRFASLVWME</sequence>
<accession>P9WKD4</accession>
<accession>L0T8Z8</accession>
<accession>O06227</accession>
<accession>P67256</accession>
<gene>
    <name type="ordered locus">MT2208</name>
</gene>